<reference key="1">
    <citation type="journal article" date="2010" name="BMC Genomics">
        <title>A genomic perspective on the potential of Actinobacillus succinogenes for industrial succinate production.</title>
        <authorList>
            <person name="McKinlay J.B."/>
            <person name="Laivenieks M."/>
            <person name="Schindler B.D."/>
            <person name="McKinlay A.A."/>
            <person name="Siddaramappa S."/>
            <person name="Challacombe J.F."/>
            <person name="Lowry S.R."/>
            <person name="Clum A."/>
            <person name="Lapidus A.L."/>
            <person name="Burkhart K.B."/>
            <person name="Harkins V."/>
            <person name="Vieille C."/>
        </authorList>
    </citation>
    <scope>NUCLEOTIDE SEQUENCE [LARGE SCALE GENOMIC DNA]</scope>
    <source>
        <strain>ATCC 55618 / DSM 22257 / CCUG 43843 / 130Z</strain>
    </source>
</reference>
<dbReference type="EMBL" id="CP000746">
    <property type="protein sequence ID" value="ABR74248.1"/>
    <property type="molecule type" value="Genomic_DNA"/>
</dbReference>
<dbReference type="RefSeq" id="WP_012072626.1">
    <property type="nucleotide sequence ID" value="NC_009655.1"/>
</dbReference>
<dbReference type="SMR" id="A6VMQ1"/>
<dbReference type="STRING" id="339671.Asuc_0878"/>
<dbReference type="KEGG" id="asu:Asuc_0878"/>
<dbReference type="eggNOG" id="COG0691">
    <property type="taxonomic scope" value="Bacteria"/>
</dbReference>
<dbReference type="HOGENOM" id="CLU_108953_3_0_6"/>
<dbReference type="OrthoDB" id="9805462at2"/>
<dbReference type="Proteomes" id="UP000001114">
    <property type="component" value="Chromosome"/>
</dbReference>
<dbReference type="GO" id="GO:0005829">
    <property type="term" value="C:cytosol"/>
    <property type="evidence" value="ECO:0007669"/>
    <property type="project" value="TreeGrafter"/>
</dbReference>
<dbReference type="GO" id="GO:0003723">
    <property type="term" value="F:RNA binding"/>
    <property type="evidence" value="ECO:0007669"/>
    <property type="project" value="UniProtKB-UniRule"/>
</dbReference>
<dbReference type="GO" id="GO:0070929">
    <property type="term" value="P:trans-translation"/>
    <property type="evidence" value="ECO:0007669"/>
    <property type="project" value="UniProtKB-UniRule"/>
</dbReference>
<dbReference type="CDD" id="cd09294">
    <property type="entry name" value="SmpB"/>
    <property type="match status" value="1"/>
</dbReference>
<dbReference type="Gene3D" id="2.40.280.10">
    <property type="match status" value="1"/>
</dbReference>
<dbReference type="HAMAP" id="MF_00023">
    <property type="entry name" value="SmpB"/>
    <property type="match status" value="1"/>
</dbReference>
<dbReference type="InterPro" id="IPR023620">
    <property type="entry name" value="SmpB"/>
</dbReference>
<dbReference type="InterPro" id="IPR000037">
    <property type="entry name" value="SsrA-bd_prot"/>
</dbReference>
<dbReference type="InterPro" id="IPR020081">
    <property type="entry name" value="SsrA-bd_prot_CS"/>
</dbReference>
<dbReference type="NCBIfam" id="NF003843">
    <property type="entry name" value="PRK05422.1"/>
    <property type="match status" value="1"/>
</dbReference>
<dbReference type="NCBIfam" id="TIGR00086">
    <property type="entry name" value="smpB"/>
    <property type="match status" value="1"/>
</dbReference>
<dbReference type="PANTHER" id="PTHR30308:SF2">
    <property type="entry name" value="SSRA-BINDING PROTEIN"/>
    <property type="match status" value="1"/>
</dbReference>
<dbReference type="PANTHER" id="PTHR30308">
    <property type="entry name" value="TMRNA-BINDING COMPONENT OF TRANS-TRANSLATION TAGGING COMPLEX"/>
    <property type="match status" value="1"/>
</dbReference>
<dbReference type="Pfam" id="PF01668">
    <property type="entry name" value="SmpB"/>
    <property type="match status" value="1"/>
</dbReference>
<dbReference type="SUPFAM" id="SSF74982">
    <property type="entry name" value="Small protein B (SmpB)"/>
    <property type="match status" value="1"/>
</dbReference>
<dbReference type="PROSITE" id="PS01317">
    <property type="entry name" value="SSRP"/>
    <property type="match status" value="1"/>
</dbReference>
<proteinExistence type="inferred from homology"/>
<evidence type="ECO:0000255" key="1">
    <source>
        <dbReference type="HAMAP-Rule" id="MF_00023"/>
    </source>
</evidence>
<comment type="function">
    <text evidence="1">Required for rescue of stalled ribosomes mediated by trans-translation. Binds to transfer-messenger RNA (tmRNA), required for stable association of tmRNA with ribosomes. tmRNA and SmpB together mimic tRNA shape, replacing the anticodon stem-loop with SmpB. tmRNA is encoded by the ssrA gene; the 2 termini fold to resemble tRNA(Ala) and it encodes a 'tag peptide', a short internal open reading frame. During trans-translation Ala-aminoacylated tmRNA acts like a tRNA, entering the A-site of stalled ribosomes, displacing the stalled mRNA. The ribosome then switches to translate the ORF on the tmRNA; the nascent peptide is terminated with the 'tag peptide' encoded by the tmRNA and targeted for degradation. The ribosome is freed to recommence translation, which seems to be the essential function of trans-translation.</text>
</comment>
<comment type="subcellular location">
    <subcellularLocation>
        <location evidence="1">Cytoplasm</location>
    </subcellularLocation>
    <text evidence="1">The tmRNA-SmpB complex associates with stalled 70S ribosomes.</text>
</comment>
<comment type="similarity">
    <text evidence="1">Belongs to the SmpB family.</text>
</comment>
<accession>A6VMQ1</accession>
<protein>
    <recommendedName>
        <fullName evidence="1">SsrA-binding protein</fullName>
    </recommendedName>
    <alternativeName>
        <fullName evidence="1">Small protein B</fullName>
    </alternativeName>
</protein>
<name>SSRP_ACTSZ</name>
<feature type="chain" id="PRO_1000071003" description="SsrA-binding protein">
    <location>
        <begin position="1"/>
        <end position="160"/>
    </location>
</feature>
<gene>
    <name evidence="1" type="primary">smpB</name>
    <name type="ordered locus">Asuc_0878</name>
</gene>
<sequence>MAKKKNKAGDNTIALNKRARHDYFIEEEIEAGLSLQGWEVKSMRAGKANISDSYVIFNNGEAFLFGATIQPLSVASTHVVCDPTRTRKLLLNERELASLFGKANRDGYTLVALSLYWKNAWAKLKIGLAKGKKQHDKREDIKDREWKVQKDRIMKNAHRG</sequence>
<organism>
    <name type="scientific">Actinobacillus succinogenes (strain ATCC 55618 / DSM 22257 / CCUG 43843 / 130Z)</name>
    <dbReference type="NCBI Taxonomy" id="339671"/>
    <lineage>
        <taxon>Bacteria</taxon>
        <taxon>Pseudomonadati</taxon>
        <taxon>Pseudomonadota</taxon>
        <taxon>Gammaproteobacteria</taxon>
        <taxon>Pasteurellales</taxon>
        <taxon>Pasteurellaceae</taxon>
        <taxon>Actinobacillus</taxon>
    </lineage>
</organism>
<keyword id="KW-0963">Cytoplasm</keyword>
<keyword id="KW-1185">Reference proteome</keyword>
<keyword id="KW-0694">RNA-binding</keyword>